<protein>
    <recommendedName>
        <fullName>Phytosulfokines 1</fullName>
    </recommendedName>
    <component>
        <recommendedName>
            <fullName>Phytosulfokine-alpha</fullName>
            <shortName>PSK-alpha</shortName>
            <shortName>Phytosulfokine-a</shortName>
        </recommendedName>
    </component>
    <component>
        <recommendedName>
            <fullName>Phytosulfokine-beta</fullName>
            <shortName>PSK-beta</shortName>
            <shortName>Phytosulfokine-b</shortName>
        </recommendedName>
    </component>
</protein>
<comment type="function">
    <text>Promotes plant cell differentiation, organogenesis and somatic embryogenesis as well as cell proliferation.</text>
</comment>
<comment type="subcellular location">
    <subcellularLocation>
        <location>Secreted</location>
    </subcellularLocation>
</comment>
<comment type="tissue specificity">
    <text>Expressed throughout the seedling. More abundant in fragments containing shoot or root apexes where cells proliferate vigorously.</text>
</comment>
<comment type="PTM">
    <text evidence="3">Sulfation is important for activity and for the binding to a putative membrane receptor.</text>
</comment>
<comment type="PTM">
    <text>PSK-alpha is produced by endopeptidase digestion. PSK-beta is produced from PSK-alpha by exopeptidase digestion.</text>
</comment>
<comment type="miscellaneous">
    <text>The N-terminal tripeptide (YIY) is the active core.</text>
</comment>
<comment type="similarity">
    <text evidence="4">Belongs to the phytosulfokine family.</text>
</comment>
<keyword id="KW-0217">Developmental protein</keyword>
<keyword id="KW-0221">Differentiation</keyword>
<keyword id="KW-0903">Direct protein sequencing</keyword>
<keyword id="KW-0325">Glycoprotein</keyword>
<keyword id="KW-0339">Growth factor</keyword>
<keyword id="KW-1185">Reference proteome</keyword>
<keyword id="KW-0964">Secreted</keyword>
<keyword id="KW-0732">Signal</keyword>
<keyword id="KW-0765">Sulfation</keyword>
<feature type="signal peptide" evidence="1">
    <location>
        <begin position="1"/>
        <end position="22"/>
    </location>
</feature>
<feature type="propeptide" id="PRO_0000024061" evidence="1">
    <location>
        <begin position="23"/>
        <end position="79"/>
    </location>
</feature>
<feature type="peptide" id="PRO_0000024062" description="Phytosulfokine-alpha" evidence="3">
    <location>
        <begin position="80"/>
        <end position="84"/>
    </location>
</feature>
<feature type="peptide" id="PRO_0000024063" description="Phytosulfokine-beta" evidence="3">
    <location>
        <begin position="80"/>
        <end position="83"/>
    </location>
</feature>
<feature type="propeptide" id="PRO_0000024064" evidence="1">
    <location>
        <begin position="85"/>
        <end position="89"/>
    </location>
</feature>
<feature type="region of interest" description="Disordered" evidence="2">
    <location>
        <begin position="33"/>
        <end position="70"/>
    </location>
</feature>
<feature type="modified residue" description="Sulfotyrosine" evidence="3">
    <location>
        <position position="80"/>
    </location>
</feature>
<feature type="modified residue" description="Sulfotyrosine" evidence="3">
    <location>
        <position position="82"/>
    </location>
</feature>
<feature type="glycosylation site" description="N-linked (GlcNAc...) asparagine" evidence="1">
    <location>
        <position position="42"/>
    </location>
</feature>
<feature type="sequence conflict" description="In Ref. 1; BAA86654." evidence="4" ref="1">
    <original>K</original>
    <variation>N</variation>
    <location>
        <position position="88"/>
    </location>
</feature>
<accession>Q0DAS9</accession>
<accession>Q67VL3</accession>
<accession>Q9ST21</accession>
<name>PSK1_ORYSJ</name>
<proteinExistence type="evidence at protein level"/>
<reference key="1">
    <citation type="journal article" date="1999" name="Proc. Natl. Acad. Sci. U.S.A.">
        <title>Oryza sativa PSK gene encodes a precursor of phytosulfokine-alpha, a sulfated peptide growth factor found in plants.</title>
        <authorList>
            <person name="Yang H."/>
            <person name="Matsubayashi Y."/>
            <person name="Nakamura K."/>
            <person name="Sakagami Y."/>
        </authorList>
    </citation>
    <scope>NUCLEOTIDE SEQUENCE [MRNA]</scope>
    <source>
        <strain>cv. Nipponbare</strain>
    </source>
</reference>
<reference key="2">
    <citation type="journal article" date="2005" name="Nature">
        <title>The map-based sequence of the rice genome.</title>
        <authorList>
            <consortium name="International rice genome sequencing project (IRGSP)"/>
        </authorList>
    </citation>
    <scope>NUCLEOTIDE SEQUENCE [LARGE SCALE GENOMIC DNA]</scope>
    <source>
        <strain>cv. Nipponbare</strain>
    </source>
</reference>
<reference key="3">
    <citation type="journal article" date="2008" name="Nucleic Acids Res.">
        <title>The rice annotation project database (RAP-DB): 2008 update.</title>
        <authorList>
            <consortium name="The rice annotation project (RAP)"/>
        </authorList>
    </citation>
    <scope>GENOME REANNOTATION</scope>
    <source>
        <strain>cv. Nipponbare</strain>
    </source>
</reference>
<reference key="4">
    <citation type="journal article" date="2013" name="Rice">
        <title>Improvement of the Oryza sativa Nipponbare reference genome using next generation sequence and optical map data.</title>
        <authorList>
            <person name="Kawahara Y."/>
            <person name="de la Bastide M."/>
            <person name="Hamilton J.P."/>
            <person name="Kanamori H."/>
            <person name="McCombie W.R."/>
            <person name="Ouyang S."/>
            <person name="Schwartz D.C."/>
            <person name="Tanaka T."/>
            <person name="Wu J."/>
            <person name="Zhou S."/>
            <person name="Childs K.L."/>
            <person name="Davidson R.M."/>
            <person name="Lin H."/>
            <person name="Quesada-Ocampo L."/>
            <person name="Vaillancourt B."/>
            <person name="Sakai H."/>
            <person name="Lee S.S."/>
            <person name="Kim J."/>
            <person name="Numa H."/>
            <person name="Itoh T."/>
            <person name="Buell C.R."/>
            <person name="Matsumoto T."/>
        </authorList>
    </citation>
    <scope>GENOME REANNOTATION</scope>
    <source>
        <strain>cv. Nipponbare</strain>
    </source>
</reference>
<reference key="5">
    <citation type="journal article" date="2005" name="PLoS Biol.">
        <title>The genomes of Oryza sativa: a history of duplications.</title>
        <authorList>
            <person name="Yu J."/>
            <person name="Wang J."/>
            <person name="Lin W."/>
            <person name="Li S."/>
            <person name="Li H."/>
            <person name="Zhou J."/>
            <person name="Ni P."/>
            <person name="Dong W."/>
            <person name="Hu S."/>
            <person name="Zeng C."/>
            <person name="Zhang J."/>
            <person name="Zhang Y."/>
            <person name="Li R."/>
            <person name="Xu Z."/>
            <person name="Li S."/>
            <person name="Li X."/>
            <person name="Zheng H."/>
            <person name="Cong L."/>
            <person name="Lin L."/>
            <person name="Yin J."/>
            <person name="Geng J."/>
            <person name="Li G."/>
            <person name="Shi J."/>
            <person name="Liu J."/>
            <person name="Lv H."/>
            <person name="Li J."/>
            <person name="Wang J."/>
            <person name="Deng Y."/>
            <person name="Ran L."/>
            <person name="Shi X."/>
            <person name="Wang X."/>
            <person name="Wu Q."/>
            <person name="Li C."/>
            <person name="Ren X."/>
            <person name="Wang J."/>
            <person name="Wang X."/>
            <person name="Li D."/>
            <person name="Liu D."/>
            <person name="Zhang X."/>
            <person name="Ji Z."/>
            <person name="Zhao W."/>
            <person name="Sun Y."/>
            <person name="Zhang Z."/>
            <person name="Bao J."/>
            <person name="Han Y."/>
            <person name="Dong L."/>
            <person name="Ji J."/>
            <person name="Chen P."/>
            <person name="Wu S."/>
            <person name="Liu J."/>
            <person name="Xiao Y."/>
            <person name="Bu D."/>
            <person name="Tan J."/>
            <person name="Yang L."/>
            <person name="Ye C."/>
            <person name="Zhang J."/>
            <person name="Xu J."/>
            <person name="Zhou Y."/>
            <person name="Yu Y."/>
            <person name="Zhang B."/>
            <person name="Zhuang S."/>
            <person name="Wei H."/>
            <person name="Liu B."/>
            <person name="Lei M."/>
            <person name="Yu H."/>
            <person name="Li Y."/>
            <person name="Xu H."/>
            <person name="Wei S."/>
            <person name="He X."/>
            <person name="Fang L."/>
            <person name="Zhang Z."/>
            <person name="Zhang Y."/>
            <person name="Huang X."/>
            <person name="Su Z."/>
            <person name="Tong W."/>
            <person name="Li J."/>
            <person name="Tong Z."/>
            <person name="Li S."/>
            <person name="Ye J."/>
            <person name="Wang L."/>
            <person name="Fang L."/>
            <person name="Lei T."/>
            <person name="Chen C.-S."/>
            <person name="Chen H.-C."/>
            <person name="Xu Z."/>
            <person name="Li H."/>
            <person name="Huang H."/>
            <person name="Zhang F."/>
            <person name="Xu H."/>
            <person name="Li N."/>
            <person name="Zhao C."/>
            <person name="Li S."/>
            <person name="Dong L."/>
            <person name="Huang Y."/>
            <person name="Li L."/>
            <person name="Xi Y."/>
            <person name="Qi Q."/>
            <person name="Li W."/>
            <person name="Zhang B."/>
            <person name="Hu W."/>
            <person name="Zhang Y."/>
            <person name="Tian X."/>
            <person name="Jiao Y."/>
            <person name="Liang X."/>
            <person name="Jin J."/>
            <person name="Gao L."/>
            <person name="Zheng W."/>
            <person name="Hao B."/>
            <person name="Liu S.-M."/>
            <person name="Wang W."/>
            <person name="Yuan L."/>
            <person name="Cao M."/>
            <person name="McDermott J."/>
            <person name="Samudrala R."/>
            <person name="Wang J."/>
            <person name="Wong G.K.-S."/>
            <person name="Yang H."/>
        </authorList>
    </citation>
    <scope>NUCLEOTIDE SEQUENCE [LARGE SCALE GENOMIC DNA]</scope>
    <source>
        <strain>cv. Nipponbare</strain>
    </source>
</reference>
<reference key="6">
    <citation type="journal article" date="1997" name="Proc. Natl. Acad. Sci. U.S.A.">
        <title>Phytosulfokine-alpha, a sulfated pentapeptide, stimulates the proliferation of rice cells by means of specific high- and low-affinity binding sites.</title>
        <authorList>
            <person name="Matsubayashi Y."/>
            <person name="Takagi L."/>
            <person name="Sakagami Y."/>
        </authorList>
    </citation>
    <scope>PROTEIN SEQUENCE OF PSK-ALPHA AND PSK-BETA</scope>
    <scope>CHARACTERIZATION</scope>
    <scope>SULFATION AT TYR-80 AND TYR-82</scope>
</reference>
<organism>
    <name type="scientific">Oryza sativa subsp. japonica</name>
    <name type="common">Rice</name>
    <dbReference type="NCBI Taxonomy" id="39947"/>
    <lineage>
        <taxon>Eukaryota</taxon>
        <taxon>Viridiplantae</taxon>
        <taxon>Streptophyta</taxon>
        <taxon>Embryophyta</taxon>
        <taxon>Tracheophyta</taxon>
        <taxon>Spermatophyta</taxon>
        <taxon>Magnoliopsida</taxon>
        <taxon>Liliopsida</taxon>
        <taxon>Poales</taxon>
        <taxon>Poaceae</taxon>
        <taxon>BOP clade</taxon>
        <taxon>Oryzoideae</taxon>
        <taxon>Oryzeae</taxon>
        <taxon>Oryzinae</taxon>
        <taxon>Oryza</taxon>
        <taxon>Oryza sativa</taxon>
    </lineage>
</organism>
<dbReference type="EMBL" id="AB020505">
    <property type="protein sequence ID" value="BAA86654.1"/>
    <property type="molecule type" value="mRNA"/>
</dbReference>
<dbReference type="EMBL" id="AP004792">
    <property type="protein sequence ID" value="BAD37806.1"/>
    <property type="molecule type" value="Genomic_DNA"/>
</dbReference>
<dbReference type="EMBL" id="AP008212">
    <property type="protein sequence ID" value="BAF20044.1"/>
    <property type="molecule type" value="Genomic_DNA"/>
</dbReference>
<dbReference type="EMBL" id="AP014962">
    <property type="status" value="NOT_ANNOTATED_CDS"/>
    <property type="molecule type" value="Genomic_DNA"/>
</dbReference>
<dbReference type="EMBL" id="CM000143">
    <property type="protein sequence ID" value="EAZ37720.1"/>
    <property type="molecule type" value="Genomic_DNA"/>
</dbReference>
<dbReference type="RefSeq" id="NP_001408586.1">
    <property type="nucleotide sequence ID" value="NM_001421657.1"/>
</dbReference>
<dbReference type="FunCoup" id="Q0DAS9">
    <property type="interactions" value="506"/>
</dbReference>
<dbReference type="STRING" id="39947.Q0DAS9"/>
<dbReference type="GlyCosmos" id="Q0DAS9">
    <property type="glycosylation" value="1 site, No reported glycans"/>
</dbReference>
<dbReference type="PaxDb" id="39947-Q0DAS9"/>
<dbReference type="EnsemblPlants" id="Os06t0633300-02">
    <property type="protein sequence ID" value="Os06t0633300-02"/>
    <property type="gene ID" value="Os06g0633300"/>
</dbReference>
<dbReference type="GeneID" id="4341588"/>
<dbReference type="Gramene" id="Os06t0633300-02">
    <property type="protein sequence ID" value="Os06t0633300-02"/>
    <property type="gene ID" value="Os06g0633300"/>
</dbReference>
<dbReference type="KEGG" id="dosa:Os06g0633300"/>
<dbReference type="InParanoid" id="Q0DAS9"/>
<dbReference type="Proteomes" id="UP000000763">
    <property type="component" value="Chromosome 6"/>
</dbReference>
<dbReference type="Proteomes" id="UP000007752">
    <property type="component" value="Chromosome 6"/>
</dbReference>
<dbReference type="Proteomes" id="UP000059680">
    <property type="component" value="Chromosome 6"/>
</dbReference>
<dbReference type="GO" id="GO:0005576">
    <property type="term" value="C:extracellular region"/>
    <property type="evidence" value="ECO:0007669"/>
    <property type="project" value="UniProtKB-SubCell"/>
</dbReference>
<dbReference type="GO" id="GO:0008083">
    <property type="term" value="F:growth factor activity"/>
    <property type="evidence" value="ECO:0007669"/>
    <property type="project" value="UniProtKB-KW"/>
</dbReference>
<dbReference type="GO" id="GO:0030154">
    <property type="term" value="P:cell differentiation"/>
    <property type="evidence" value="ECO:0007669"/>
    <property type="project" value="UniProtKB-KW"/>
</dbReference>
<evidence type="ECO:0000255" key="1"/>
<evidence type="ECO:0000256" key="2">
    <source>
        <dbReference type="SAM" id="MobiDB-lite"/>
    </source>
</evidence>
<evidence type="ECO:0000269" key="3">
    <source>
    </source>
</evidence>
<evidence type="ECO:0000305" key="4"/>
<sequence>MVNPGRTARALCLLCLALLLLGQDTHSRKLLLQEKHSHGVGNGTTTTQEPSRENGGSTGSNNNGQLQFDSAKWEEFHTDYIYTQDVKKP</sequence>
<gene>
    <name type="primary">PSK1</name>
    <name type="synonym">PSK</name>
    <name type="ordered locus">Os06g0633300</name>
    <name type="ordered locus">LOC_Os06g42680</name>
    <name type="ORF">OsJ_021203</name>
    <name type="ORF">P0505A04.32-1</name>
</gene>